<comment type="function">
    <text>Binds to the upstream activation site (UAS) of the CYC1 gene and other genes involved in mitochondrial electron transport and activates their expression. Recognizes the sequence CCAAT.</text>
</comment>
<comment type="subunit">
    <text evidence="1">Belongs to a heterotrimeric CCAAT-binding complex.</text>
</comment>
<comment type="subcellular location">
    <subcellularLocation>
        <location>Nucleus</location>
    </subcellularLocation>
</comment>
<comment type="similarity">
    <text evidence="2">Belongs to the NFYA/HAP2 subunit family.</text>
</comment>
<evidence type="ECO:0000250" key="1"/>
<evidence type="ECO:0000255" key="2">
    <source>
        <dbReference type="PROSITE-ProRule" id="PRU00966"/>
    </source>
</evidence>
<evidence type="ECO:0000256" key="3">
    <source>
        <dbReference type="SAM" id="MobiDB-lite"/>
    </source>
</evidence>
<proteinExistence type="inferred from homology"/>
<organism>
    <name type="scientific">Kluyveromyces lactis (strain ATCC 8585 / CBS 2359 / DSM 70799 / NBRC 1267 / NRRL Y-1140 / WM37)</name>
    <name type="common">Yeast</name>
    <name type="synonym">Candida sphaerica</name>
    <dbReference type="NCBI Taxonomy" id="284590"/>
    <lineage>
        <taxon>Eukaryota</taxon>
        <taxon>Fungi</taxon>
        <taxon>Dikarya</taxon>
        <taxon>Ascomycota</taxon>
        <taxon>Saccharomycotina</taxon>
        <taxon>Saccharomycetes</taxon>
        <taxon>Saccharomycetales</taxon>
        <taxon>Saccharomycetaceae</taxon>
        <taxon>Kluyveromyces</taxon>
    </lineage>
</organism>
<protein>
    <recommendedName>
        <fullName>Transcriptional activator HAP2</fullName>
    </recommendedName>
</protein>
<reference key="1">
    <citation type="journal article" date="1995" name="Gene">
        <title>The respiratory system of Kluyveromyces lactis escapes from HAP2 control.</title>
        <authorList>
            <person name="Nguyen C."/>
            <person name="Bolotin-Fukuhara M."/>
            <person name="Wesolowski-Louvel M."/>
            <person name="Fukuhara H."/>
        </authorList>
    </citation>
    <scope>NUCLEOTIDE SEQUENCE [GENOMIC DNA]</scope>
    <source>
        <strain>ATCC 8585 / CBS 2359 / DSM 70799 / NBRC 1267 / NRRL Y-1140 / WM37</strain>
    </source>
</reference>
<reference key="2">
    <citation type="journal article" date="2004" name="Nature">
        <title>Genome evolution in yeasts.</title>
        <authorList>
            <person name="Dujon B."/>
            <person name="Sherman D."/>
            <person name="Fischer G."/>
            <person name="Durrens P."/>
            <person name="Casaregola S."/>
            <person name="Lafontaine I."/>
            <person name="de Montigny J."/>
            <person name="Marck C."/>
            <person name="Neuveglise C."/>
            <person name="Talla E."/>
            <person name="Goffard N."/>
            <person name="Frangeul L."/>
            <person name="Aigle M."/>
            <person name="Anthouard V."/>
            <person name="Babour A."/>
            <person name="Barbe V."/>
            <person name="Barnay S."/>
            <person name="Blanchin S."/>
            <person name="Beckerich J.-M."/>
            <person name="Beyne E."/>
            <person name="Bleykasten C."/>
            <person name="Boisrame A."/>
            <person name="Boyer J."/>
            <person name="Cattolico L."/>
            <person name="Confanioleri F."/>
            <person name="de Daruvar A."/>
            <person name="Despons L."/>
            <person name="Fabre E."/>
            <person name="Fairhead C."/>
            <person name="Ferry-Dumazet H."/>
            <person name="Groppi A."/>
            <person name="Hantraye F."/>
            <person name="Hennequin C."/>
            <person name="Jauniaux N."/>
            <person name="Joyet P."/>
            <person name="Kachouri R."/>
            <person name="Kerrest A."/>
            <person name="Koszul R."/>
            <person name="Lemaire M."/>
            <person name="Lesur I."/>
            <person name="Ma L."/>
            <person name="Muller H."/>
            <person name="Nicaud J.-M."/>
            <person name="Nikolski M."/>
            <person name="Oztas S."/>
            <person name="Ozier-Kalogeropoulos O."/>
            <person name="Pellenz S."/>
            <person name="Potier S."/>
            <person name="Richard G.-F."/>
            <person name="Straub M.-L."/>
            <person name="Suleau A."/>
            <person name="Swennen D."/>
            <person name="Tekaia F."/>
            <person name="Wesolowski-Louvel M."/>
            <person name="Westhof E."/>
            <person name="Wirth B."/>
            <person name="Zeniou-Meyer M."/>
            <person name="Zivanovic Y."/>
            <person name="Bolotin-Fukuhara M."/>
            <person name="Thierry A."/>
            <person name="Bouchier C."/>
            <person name="Caudron B."/>
            <person name="Scarpelli C."/>
            <person name="Gaillardin C."/>
            <person name="Weissenbach J."/>
            <person name="Wincker P."/>
            <person name="Souciet J.-L."/>
        </authorList>
    </citation>
    <scope>NUCLEOTIDE SEQUENCE [LARGE SCALE GENOMIC DNA]</scope>
    <source>
        <strain>ATCC 8585 / CBS 2359 / DSM 70799 / NBRC 1267 / NRRL Y-1140 / WM37</strain>
    </source>
</reference>
<gene>
    <name type="primary">HAP2</name>
    <name type="ordered locus">KLLA0A00891g</name>
</gene>
<feature type="chain" id="PRO_0000198782" description="Transcriptional activator HAP2">
    <location>
        <begin position="1"/>
        <end position="300"/>
    </location>
</feature>
<feature type="DNA-binding region" description="NFYA/HAP2-type" evidence="2">
    <location>
        <begin position="218"/>
        <end position="243"/>
    </location>
</feature>
<feature type="region of interest" description="Disordered" evidence="3">
    <location>
        <begin position="1"/>
        <end position="81"/>
    </location>
</feature>
<feature type="region of interest" description="Disordered" evidence="3">
    <location>
        <begin position="247"/>
        <end position="300"/>
    </location>
</feature>
<feature type="short sequence motif" description="Subunit association domain (SAD)">
    <location>
        <begin position="188"/>
        <end position="211"/>
    </location>
</feature>
<feature type="compositionally biased region" description="Basic and acidic residues" evidence="3">
    <location>
        <begin position="36"/>
        <end position="68"/>
    </location>
</feature>
<feature type="compositionally biased region" description="Polar residues" evidence="3">
    <location>
        <begin position="69"/>
        <end position="80"/>
    </location>
</feature>
<feature type="compositionally biased region" description="Basic and acidic residues" evidence="3">
    <location>
        <begin position="284"/>
        <end position="300"/>
    </location>
</feature>
<keyword id="KW-0010">Activator</keyword>
<keyword id="KW-0238">DNA-binding</keyword>
<keyword id="KW-0539">Nucleus</keyword>
<keyword id="KW-1185">Reference proteome</keyword>
<keyword id="KW-0804">Transcription</keyword>
<keyword id="KW-0805">Transcription regulation</keyword>
<dbReference type="EMBL" id="U09272">
    <property type="protein sequence ID" value="AAA67874.1"/>
    <property type="molecule type" value="Genomic_DNA"/>
</dbReference>
<dbReference type="EMBL" id="CR382121">
    <property type="protein sequence ID" value="CAH02626.1"/>
    <property type="molecule type" value="Genomic_DNA"/>
</dbReference>
<dbReference type="RefSeq" id="XP_451038.1">
    <property type="nucleotide sequence ID" value="XM_451038.1"/>
</dbReference>
<dbReference type="SMR" id="P53768"/>
<dbReference type="STRING" id="284590.P53768"/>
<dbReference type="PaxDb" id="284590-P53768"/>
<dbReference type="KEGG" id="kla:KLLA0_A00891g"/>
<dbReference type="eggNOG" id="KOG1561">
    <property type="taxonomic scope" value="Eukaryota"/>
</dbReference>
<dbReference type="HOGENOM" id="CLU_080763_1_0_1"/>
<dbReference type="InParanoid" id="P53768"/>
<dbReference type="Proteomes" id="UP000000598">
    <property type="component" value="Chromosome A"/>
</dbReference>
<dbReference type="GO" id="GO:0016602">
    <property type="term" value="C:CCAAT-binding factor complex"/>
    <property type="evidence" value="ECO:0007669"/>
    <property type="project" value="InterPro"/>
</dbReference>
<dbReference type="GO" id="GO:0003677">
    <property type="term" value="F:DNA binding"/>
    <property type="evidence" value="ECO:0007669"/>
    <property type="project" value="UniProtKB-KW"/>
</dbReference>
<dbReference type="GO" id="GO:0003700">
    <property type="term" value="F:DNA-binding transcription factor activity"/>
    <property type="evidence" value="ECO:0007669"/>
    <property type="project" value="InterPro"/>
</dbReference>
<dbReference type="Gene3D" id="6.10.250.2430">
    <property type="match status" value="1"/>
</dbReference>
<dbReference type="InterPro" id="IPR018362">
    <property type="entry name" value="CCAAT-binding_factor_CS"/>
</dbReference>
<dbReference type="InterPro" id="IPR001289">
    <property type="entry name" value="NFYA"/>
</dbReference>
<dbReference type="PANTHER" id="PTHR12632">
    <property type="entry name" value="TRANSCRIPTION FACTOR NF-Y ALPHA-RELATED"/>
    <property type="match status" value="1"/>
</dbReference>
<dbReference type="Pfam" id="PF02045">
    <property type="entry name" value="CBFB_NFYA"/>
    <property type="match status" value="1"/>
</dbReference>
<dbReference type="PRINTS" id="PR00616">
    <property type="entry name" value="CCAATSUBUNTB"/>
</dbReference>
<dbReference type="SMART" id="SM00521">
    <property type="entry name" value="CBF"/>
    <property type="match status" value="1"/>
</dbReference>
<dbReference type="PROSITE" id="PS00686">
    <property type="entry name" value="NFYA_HAP2_1"/>
    <property type="match status" value="1"/>
</dbReference>
<dbReference type="PROSITE" id="PS51152">
    <property type="entry name" value="NFYA_HAP2_2"/>
    <property type="match status" value="1"/>
</dbReference>
<name>HAP2_KLULA</name>
<accession>P53768</accession>
<sequence>MPTELITYEQNFSSGVDAENDYPPLDSGMGSFQVSELERQGDSHKRSNDEISELRDETLNGREKKLRQSESISRNSTGNAQVEAIPHHSINVDQSDNLLSEQENPTKVYLYDDPHLENDPQQRQEESDANGIMEKLTDDNSMKQVSNAKTSLETAQFLETSNSMELQRTKPHDMNIISPSEPLEQPFYVNAKQYYRILKRRYARAKLEENLKISRERRPYLHESRHKHAMRRPRGQGGRFLTAAEMAEMKRKEEEGTDNDSFLQEHVPKMNVLPQQLPGPVKDNNNEKSDEKPVAKEASN</sequence>